<feature type="chain" id="PRO_0000073862" description="Calcium-binding protein E63-1">
    <location>
        <begin position="1"/>
        <end position="193"/>
    </location>
</feature>
<feature type="domain" description="EF-hand 1" evidence="1">
    <location>
        <begin position="35"/>
        <end position="70"/>
    </location>
</feature>
<feature type="domain" description="EF-hand 2" evidence="1">
    <location>
        <begin position="71"/>
        <end position="106"/>
    </location>
</feature>
<feature type="domain" description="EF-hand 3" evidence="1">
    <location>
        <begin position="127"/>
        <end position="162"/>
    </location>
</feature>
<feature type="domain" description="EF-hand 4" evidence="1">
    <location>
        <begin position="163"/>
        <end position="193"/>
    </location>
</feature>
<feature type="binding site" evidence="1">
    <location>
        <position position="48"/>
    </location>
    <ligand>
        <name>Ca(2+)</name>
        <dbReference type="ChEBI" id="CHEBI:29108"/>
        <label>1</label>
    </ligand>
</feature>
<feature type="binding site" evidence="1">
    <location>
        <position position="50"/>
    </location>
    <ligand>
        <name>Ca(2+)</name>
        <dbReference type="ChEBI" id="CHEBI:29108"/>
        <label>1</label>
    </ligand>
</feature>
<feature type="binding site" evidence="1">
    <location>
        <position position="52"/>
    </location>
    <ligand>
        <name>Ca(2+)</name>
        <dbReference type="ChEBI" id="CHEBI:29108"/>
        <label>1</label>
    </ligand>
</feature>
<feature type="binding site" evidence="1">
    <location>
        <position position="54"/>
    </location>
    <ligand>
        <name>Ca(2+)</name>
        <dbReference type="ChEBI" id="CHEBI:29108"/>
        <label>1</label>
    </ligand>
</feature>
<feature type="binding site" evidence="1">
    <location>
        <position position="59"/>
    </location>
    <ligand>
        <name>Ca(2+)</name>
        <dbReference type="ChEBI" id="CHEBI:29108"/>
        <label>1</label>
    </ligand>
</feature>
<feature type="binding site" evidence="1">
    <location>
        <position position="140"/>
    </location>
    <ligand>
        <name>Ca(2+)</name>
        <dbReference type="ChEBI" id="CHEBI:29108"/>
        <label>2</label>
    </ligand>
</feature>
<feature type="binding site" evidence="1">
    <location>
        <position position="142"/>
    </location>
    <ligand>
        <name>Ca(2+)</name>
        <dbReference type="ChEBI" id="CHEBI:29108"/>
        <label>2</label>
    </ligand>
</feature>
<feature type="binding site" evidence="1">
    <location>
        <position position="144"/>
    </location>
    <ligand>
        <name>Ca(2+)</name>
        <dbReference type="ChEBI" id="CHEBI:29108"/>
        <label>2</label>
    </ligand>
</feature>
<feature type="binding site" evidence="1">
    <location>
        <position position="151"/>
    </location>
    <ligand>
        <name>Ca(2+)</name>
        <dbReference type="ChEBI" id="CHEBI:29108"/>
        <label>2</label>
    </ligand>
</feature>
<feature type="binding site" evidence="1">
    <location>
        <position position="176"/>
    </location>
    <ligand>
        <name>Ca(2+)</name>
        <dbReference type="ChEBI" id="CHEBI:29108"/>
        <label>3</label>
    </ligand>
</feature>
<feature type="binding site" evidence="1">
    <location>
        <position position="178"/>
    </location>
    <ligand>
        <name>Ca(2+)</name>
        <dbReference type="ChEBI" id="CHEBI:29108"/>
        <label>3</label>
    </ligand>
</feature>
<feature type="binding site" evidence="1">
    <location>
        <position position="180"/>
    </location>
    <ligand>
        <name>Ca(2+)</name>
        <dbReference type="ChEBI" id="CHEBI:29108"/>
        <label>3</label>
    </ligand>
</feature>
<feature type="binding site" evidence="1">
    <location>
        <position position="182"/>
    </location>
    <ligand>
        <name>Ca(2+)</name>
        <dbReference type="ChEBI" id="CHEBI:29108"/>
        <label>3</label>
    </ligand>
</feature>
<feature type="binding site" evidence="1">
    <location>
        <position position="187"/>
    </location>
    <ligand>
        <name>Ca(2+)</name>
        <dbReference type="ChEBI" id="CHEBI:29108"/>
        <label>3</label>
    </ligand>
</feature>
<feature type="sequence conflict" description="In Ref. 1; AAB61120." evidence="2" ref="1">
    <original>L</original>
    <variation>M</variation>
    <location>
        <position position="171"/>
    </location>
</feature>
<keyword id="KW-0106">Calcium</keyword>
<keyword id="KW-0479">Metal-binding</keyword>
<keyword id="KW-1185">Reference proteome</keyword>
<keyword id="KW-0677">Repeat</keyword>
<accession>P48593</accession>
<accession>Q9I7T4</accession>
<accession>Q9VZL0</accession>
<sequence>MSPMSGLRQQLKMLGTALLGKRATKSVKKKPFTEVEIKDLRTAFDLLDRNRDGRVTANELQFMLKNLGINVSDELIHDLIREASHSGNGLINEAEFLQWVGRIQALRDEQHSHEDSKDSKPVDEADDVTEDLIAAFRVFDRDGNGFITRDELQTAMEMIGEPLNEQQLEQLLVIADLDQDGRINYEEFTRLLL</sequence>
<reference key="1">
    <citation type="journal article" date="1995" name="Development">
        <title>The Drosophila 63F early puff contains E63-1, an ecdysone-inducible gene that encodes a novel Ca(2+)-binding protein.</title>
        <authorList>
            <person name="Andres A.J."/>
            <person name="Thummel C.S."/>
        </authorList>
    </citation>
    <scope>NUCLEOTIDE SEQUENCE [MRNA]</scope>
    <source>
        <strain>Canton-S</strain>
    </source>
</reference>
<reference key="2">
    <citation type="journal article" date="2000" name="Science">
        <title>The genome sequence of Drosophila melanogaster.</title>
        <authorList>
            <person name="Adams M.D."/>
            <person name="Celniker S.E."/>
            <person name="Holt R.A."/>
            <person name="Evans C.A."/>
            <person name="Gocayne J.D."/>
            <person name="Amanatides P.G."/>
            <person name="Scherer S.E."/>
            <person name="Li P.W."/>
            <person name="Hoskins R.A."/>
            <person name="Galle R.F."/>
            <person name="George R.A."/>
            <person name="Lewis S.E."/>
            <person name="Richards S."/>
            <person name="Ashburner M."/>
            <person name="Henderson S.N."/>
            <person name="Sutton G.G."/>
            <person name="Wortman J.R."/>
            <person name="Yandell M.D."/>
            <person name="Zhang Q."/>
            <person name="Chen L.X."/>
            <person name="Brandon R.C."/>
            <person name="Rogers Y.-H.C."/>
            <person name="Blazej R.G."/>
            <person name="Champe M."/>
            <person name="Pfeiffer B.D."/>
            <person name="Wan K.H."/>
            <person name="Doyle C."/>
            <person name="Baxter E.G."/>
            <person name="Helt G."/>
            <person name="Nelson C.R."/>
            <person name="Miklos G.L.G."/>
            <person name="Abril J.F."/>
            <person name="Agbayani A."/>
            <person name="An H.-J."/>
            <person name="Andrews-Pfannkoch C."/>
            <person name="Baldwin D."/>
            <person name="Ballew R.M."/>
            <person name="Basu A."/>
            <person name="Baxendale J."/>
            <person name="Bayraktaroglu L."/>
            <person name="Beasley E.M."/>
            <person name="Beeson K.Y."/>
            <person name="Benos P.V."/>
            <person name="Berman B.P."/>
            <person name="Bhandari D."/>
            <person name="Bolshakov S."/>
            <person name="Borkova D."/>
            <person name="Botchan M.R."/>
            <person name="Bouck J."/>
            <person name="Brokstein P."/>
            <person name="Brottier P."/>
            <person name="Burtis K.C."/>
            <person name="Busam D.A."/>
            <person name="Butler H."/>
            <person name="Cadieu E."/>
            <person name="Center A."/>
            <person name="Chandra I."/>
            <person name="Cherry J.M."/>
            <person name="Cawley S."/>
            <person name="Dahlke C."/>
            <person name="Davenport L.B."/>
            <person name="Davies P."/>
            <person name="de Pablos B."/>
            <person name="Delcher A."/>
            <person name="Deng Z."/>
            <person name="Mays A.D."/>
            <person name="Dew I."/>
            <person name="Dietz S.M."/>
            <person name="Dodson K."/>
            <person name="Doup L.E."/>
            <person name="Downes M."/>
            <person name="Dugan-Rocha S."/>
            <person name="Dunkov B.C."/>
            <person name="Dunn P."/>
            <person name="Durbin K.J."/>
            <person name="Evangelista C.C."/>
            <person name="Ferraz C."/>
            <person name="Ferriera S."/>
            <person name="Fleischmann W."/>
            <person name="Fosler C."/>
            <person name="Gabrielian A.E."/>
            <person name="Garg N.S."/>
            <person name="Gelbart W.M."/>
            <person name="Glasser K."/>
            <person name="Glodek A."/>
            <person name="Gong F."/>
            <person name="Gorrell J.H."/>
            <person name="Gu Z."/>
            <person name="Guan P."/>
            <person name="Harris M."/>
            <person name="Harris N.L."/>
            <person name="Harvey D.A."/>
            <person name="Heiman T.J."/>
            <person name="Hernandez J.R."/>
            <person name="Houck J."/>
            <person name="Hostin D."/>
            <person name="Houston K.A."/>
            <person name="Howland T.J."/>
            <person name="Wei M.-H."/>
            <person name="Ibegwam C."/>
            <person name="Jalali M."/>
            <person name="Kalush F."/>
            <person name="Karpen G.H."/>
            <person name="Ke Z."/>
            <person name="Kennison J.A."/>
            <person name="Ketchum K.A."/>
            <person name="Kimmel B.E."/>
            <person name="Kodira C.D."/>
            <person name="Kraft C.L."/>
            <person name="Kravitz S."/>
            <person name="Kulp D."/>
            <person name="Lai Z."/>
            <person name="Lasko P."/>
            <person name="Lei Y."/>
            <person name="Levitsky A.A."/>
            <person name="Li J.H."/>
            <person name="Li Z."/>
            <person name="Liang Y."/>
            <person name="Lin X."/>
            <person name="Liu X."/>
            <person name="Mattei B."/>
            <person name="McIntosh T.C."/>
            <person name="McLeod M.P."/>
            <person name="McPherson D."/>
            <person name="Merkulov G."/>
            <person name="Milshina N.V."/>
            <person name="Mobarry C."/>
            <person name="Morris J."/>
            <person name="Moshrefi A."/>
            <person name="Mount S.M."/>
            <person name="Moy M."/>
            <person name="Murphy B."/>
            <person name="Murphy L."/>
            <person name="Muzny D.M."/>
            <person name="Nelson D.L."/>
            <person name="Nelson D.R."/>
            <person name="Nelson K.A."/>
            <person name="Nixon K."/>
            <person name="Nusskern D.R."/>
            <person name="Pacleb J.M."/>
            <person name="Palazzolo M."/>
            <person name="Pittman G.S."/>
            <person name="Pan S."/>
            <person name="Pollard J."/>
            <person name="Puri V."/>
            <person name="Reese M.G."/>
            <person name="Reinert K."/>
            <person name="Remington K."/>
            <person name="Saunders R.D.C."/>
            <person name="Scheeler F."/>
            <person name="Shen H."/>
            <person name="Shue B.C."/>
            <person name="Siden-Kiamos I."/>
            <person name="Simpson M."/>
            <person name="Skupski M.P."/>
            <person name="Smith T.J."/>
            <person name="Spier E."/>
            <person name="Spradling A.C."/>
            <person name="Stapleton M."/>
            <person name="Strong R."/>
            <person name="Sun E."/>
            <person name="Svirskas R."/>
            <person name="Tector C."/>
            <person name="Turner R."/>
            <person name="Venter E."/>
            <person name="Wang A.H."/>
            <person name="Wang X."/>
            <person name="Wang Z.-Y."/>
            <person name="Wassarman D.A."/>
            <person name="Weinstock G.M."/>
            <person name="Weissenbach J."/>
            <person name="Williams S.M."/>
            <person name="Woodage T."/>
            <person name="Worley K.C."/>
            <person name="Wu D."/>
            <person name="Yang S."/>
            <person name="Yao Q.A."/>
            <person name="Ye J."/>
            <person name="Yeh R.-F."/>
            <person name="Zaveri J.S."/>
            <person name="Zhan M."/>
            <person name="Zhang G."/>
            <person name="Zhao Q."/>
            <person name="Zheng L."/>
            <person name="Zheng X.H."/>
            <person name="Zhong F.N."/>
            <person name="Zhong W."/>
            <person name="Zhou X."/>
            <person name="Zhu S.C."/>
            <person name="Zhu X."/>
            <person name="Smith H.O."/>
            <person name="Gibbs R.A."/>
            <person name="Myers E.W."/>
            <person name="Rubin G.M."/>
            <person name="Venter J.C."/>
        </authorList>
    </citation>
    <scope>NUCLEOTIDE SEQUENCE [LARGE SCALE GENOMIC DNA]</scope>
    <source>
        <strain>Berkeley</strain>
    </source>
</reference>
<reference key="3">
    <citation type="journal article" date="2002" name="Genome Biol.">
        <title>Annotation of the Drosophila melanogaster euchromatic genome: a systematic review.</title>
        <authorList>
            <person name="Misra S."/>
            <person name="Crosby M.A."/>
            <person name="Mungall C.J."/>
            <person name="Matthews B.B."/>
            <person name="Campbell K.S."/>
            <person name="Hradecky P."/>
            <person name="Huang Y."/>
            <person name="Kaminker J.S."/>
            <person name="Millburn G.H."/>
            <person name="Prochnik S.E."/>
            <person name="Smith C.D."/>
            <person name="Tupy J.L."/>
            <person name="Whitfield E.J."/>
            <person name="Bayraktaroglu L."/>
            <person name="Berman B.P."/>
            <person name="Bettencourt B.R."/>
            <person name="Celniker S.E."/>
            <person name="de Grey A.D.N.J."/>
            <person name="Drysdale R.A."/>
            <person name="Harris N.L."/>
            <person name="Richter J."/>
            <person name="Russo S."/>
            <person name="Schroeder A.J."/>
            <person name="Shu S.Q."/>
            <person name="Stapleton M."/>
            <person name="Yamada C."/>
            <person name="Ashburner M."/>
            <person name="Gelbart W.M."/>
            <person name="Rubin G.M."/>
            <person name="Lewis S.E."/>
        </authorList>
    </citation>
    <scope>GENOME REANNOTATION</scope>
    <source>
        <strain>Berkeley</strain>
    </source>
</reference>
<name>E631_DROME</name>
<organism>
    <name type="scientific">Drosophila melanogaster</name>
    <name type="common">Fruit fly</name>
    <dbReference type="NCBI Taxonomy" id="7227"/>
    <lineage>
        <taxon>Eukaryota</taxon>
        <taxon>Metazoa</taxon>
        <taxon>Ecdysozoa</taxon>
        <taxon>Arthropoda</taxon>
        <taxon>Hexapoda</taxon>
        <taxon>Insecta</taxon>
        <taxon>Pterygota</taxon>
        <taxon>Neoptera</taxon>
        <taxon>Endopterygota</taxon>
        <taxon>Diptera</taxon>
        <taxon>Brachycera</taxon>
        <taxon>Muscomorpha</taxon>
        <taxon>Ephydroidea</taxon>
        <taxon>Drosophilidae</taxon>
        <taxon>Drosophila</taxon>
        <taxon>Sophophora</taxon>
    </lineage>
</organism>
<proteinExistence type="evidence at transcript level"/>
<protein>
    <recommendedName>
        <fullName>Calcium-binding protein E63-1</fullName>
    </recommendedName>
</protein>
<gene>
    <name type="primary">Eip63F-1</name>
    <name type="synonym">E63-1</name>
    <name type="ORF">CG15855</name>
</gene>
<evidence type="ECO:0000255" key="1">
    <source>
        <dbReference type="PROSITE-ProRule" id="PRU00448"/>
    </source>
</evidence>
<evidence type="ECO:0000305" key="2"/>
<comment type="induction">
    <text>By ecdysone.</text>
</comment>
<dbReference type="EMBL" id="U25882">
    <property type="protein sequence ID" value="AAB61120.1"/>
    <property type="molecule type" value="mRNA"/>
</dbReference>
<dbReference type="EMBL" id="AE014296">
    <property type="protein sequence ID" value="AAG22243.1"/>
    <property type="molecule type" value="Genomic_DNA"/>
</dbReference>
<dbReference type="RefSeq" id="NP_524902.2">
    <property type="nucleotide sequence ID" value="NM_080163.4"/>
</dbReference>
<dbReference type="SMR" id="P48593"/>
<dbReference type="BioGRID" id="71025">
    <property type="interactions" value="5"/>
</dbReference>
<dbReference type="DIP" id="DIP-21826N"/>
<dbReference type="FunCoup" id="P48593">
    <property type="interactions" value="110"/>
</dbReference>
<dbReference type="IntAct" id="P48593">
    <property type="interactions" value="3"/>
</dbReference>
<dbReference type="STRING" id="7227.FBpp0073031"/>
<dbReference type="PaxDb" id="7227-FBpp0073031"/>
<dbReference type="DNASU" id="47878"/>
<dbReference type="EnsemblMetazoa" id="FBtr0073174">
    <property type="protein sequence ID" value="FBpp0073031"/>
    <property type="gene ID" value="FBgn0004910"/>
</dbReference>
<dbReference type="GeneID" id="47878"/>
<dbReference type="KEGG" id="dme:Dmel_CG15855"/>
<dbReference type="AGR" id="FB:FBgn0004910"/>
<dbReference type="CTD" id="47878"/>
<dbReference type="FlyBase" id="FBgn0004910">
    <property type="gene designation" value="Eip63F-1"/>
</dbReference>
<dbReference type="VEuPathDB" id="VectorBase:FBgn0004910"/>
<dbReference type="eggNOG" id="KOG0027">
    <property type="taxonomic scope" value="Eukaryota"/>
</dbReference>
<dbReference type="InParanoid" id="P48593"/>
<dbReference type="OMA" id="QHEDNAS"/>
<dbReference type="OrthoDB" id="26525at2759"/>
<dbReference type="PhylomeDB" id="P48593"/>
<dbReference type="SignaLink" id="P48593"/>
<dbReference type="BioGRID-ORCS" id="47878">
    <property type="hits" value="0 hits in 1 CRISPR screen"/>
</dbReference>
<dbReference type="GenomeRNAi" id="47878"/>
<dbReference type="PRO" id="PR:P48593"/>
<dbReference type="Proteomes" id="UP000000803">
    <property type="component" value="Chromosome 3L"/>
</dbReference>
<dbReference type="Bgee" id="FBgn0004910">
    <property type="expression patterns" value="Expressed in lamina wide-field cell (Drosophila) in brain and 182 other cell types or tissues"/>
</dbReference>
<dbReference type="ExpressionAtlas" id="P48593">
    <property type="expression patterns" value="baseline and differential"/>
</dbReference>
<dbReference type="GO" id="GO:0005737">
    <property type="term" value="C:cytoplasm"/>
    <property type="evidence" value="ECO:0000314"/>
    <property type="project" value="FlyBase"/>
</dbReference>
<dbReference type="GO" id="GO:0005634">
    <property type="term" value="C:nucleus"/>
    <property type="evidence" value="ECO:0000314"/>
    <property type="project" value="FlyBase"/>
</dbReference>
<dbReference type="GO" id="GO:0005886">
    <property type="term" value="C:plasma membrane"/>
    <property type="evidence" value="ECO:0000314"/>
    <property type="project" value="FlyBase"/>
</dbReference>
<dbReference type="GO" id="GO:0005509">
    <property type="term" value="F:calcium ion binding"/>
    <property type="evidence" value="ECO:0000314"/>
    <property type="project" value="FlyBase"/>
</dbReference>
<dbReference type="GO" id="GO:0030234">
    <property type="term" value="F:enzyme regulator activity"/>
    <property type="evidence" value="ECO:0000318"/>
    <property type="project" value="GO_Central"/>
</dbReference>
<dbReference type="GO" id="GO:0000226">
    <property type="term" value="P:microtubule cytoskeleton organization"/>
    <property type="evidence" value="ECO:0000318"/>
    <property type="project" value="GO_Central"/>
</dbReference>
<dbReference type="CDD" id="cd00051">
    <property type="entry name" value="EFh"/>
    <property type="match status" value="1"/>
</dbReference>
<dbReference type="FunFam" id="1.10.238.10:FF:000181">
    <property type="entry name" value="CALML5 isoform 1"/>
    <property type="match status" value="1"/>
</dbReference>
<dbReference type="FunFam" id="1.10.238.10:FF:000422">
    <property type="entry name" value="Uncharacterized protein, isoform A"/>
    <property type="match status" value="1"/>
</dbReference>
<dbReference type="Gene3D" id="1.10.238.10">
    <property type="entry name" value="EF-hand"/>
    <property type="match status" value="2"/>
</dbReference>
<dbReference type="InterPro" id="IPR050145">
    <property type="entry name" value="Centrin_CML-like"/>
</dbReference>
<dbReference type="InterPro" id="IPR011992">
    <property type="entry name" value="EF-hand-dom_pair"/>
</dbReference>
<dbReference type="InterPro" id="IPR018247">
    <property type="entry name" value="EF_Hand_1_Ca_BS"/>
</dbReference>
<dbReference type="InterPro" id="IPR002048">
    <property type="entry name" value="EF_hand_dom"/>
</dbReference>
<dbReference type="PANTHER" id="PTHR23050">
    <property type="entry name" value="CALCIUM BINDING PROTEIN"/>
    <property type="match status" value="1"/>
</dbReference>
<dbReference type="Pfam" id="PF13499">
    <property type="entry name" value="EF-hand_7"/>
    <property type="match status" value="2"/>
</dbReference>
<dbReference type="SMART" id="SM00054">
    <property type="entry name" value="EFh"/>
    <property type="match status" value="4"/>
</dbReference>
<dbReference type="SUPFAM" id="SSF47473">
    <property type="entry name" value="EF-hand"/>
    <property type="match status" value="1"/>
</dbReference>
<dbReference type="PROSITE" id="PS00018">
    <property type="entry name" value="EF_HAND_1"/>
    <property type="match status" value="3"/>
</dbReference>
<dbReference type="PROSITE" id="PS50222">
    <property type="entry name" value="EF_HAND_2"/>
    <property type="match status" value="4"/>
</dbReference>